<feature type="peptide" id="PRO_0000398130" description="Potassium channel toxin alpha-KTx6 OcyKTx1" evidence="7">
    <location>
        <begin position="1"/>
        <end position="26" status="greater than"/>
    </location>
</feature>
<feature type="disulfide bond" evidence="2">
    <location>
        <begin position="3"/>
        <end position="24"/>
    </location>
</feature>
<feature type="disulfide bond" evidence="2">
    <location>
        <begin position="9"/>
        <end status="unknown"/>
    </location>
</feature>
<feature type="disulfide bond" evidence="2">
    <location>
        <begin position="13"/>
        <end status="unknown"/>
    </location>
</feature>
<feature type="disulfide bond" evidence="2">
    <location>
        <begin position="19"/>
        <end status="unknown"/>
    </location>
</feature>
<feature type="non-terminal residue" evidence="5">
    <location>
        <position position="26"/>
    </location>
</feature>
<name>KAX6W_OPICY</name>
<proteinExistence type="evidence at protein level"/>
<dbReference type="SMR" id="P86115"/>
<dbReference type="GO" id="GO:0005576">
    <property type="term" value="C:extracellular region"/>
    <property type="evidence" value="ECO:0007669"/>
    <property type="project" value="UniProtKB-SubCell"/>
</dbReference>
<dbReference type="GO" id="GO:0008200">
    <property type="term" value="F:ion channel inhibitor activity"/>
    <property type="evidence" value="ECO:0007669"/>
    <property type="project" value="InterPro"/>
</dbReference>
<dbReference type="GO" id="GO:0015459">
    <property type="term" value="F:potassium channel regulator activity"/>
    <property type="evidence" value="ECO:0007669"/>
    <property type="project" value="UniProtKB-KW"/>
</dbReference>
<dbReference type="GO" id="GO:0090729">
    <property type="term" value="F:toxin activity"/>
    <property type="evidence" value="ECO:0007669"/>
    <property type="project" value="UniProtKB-KW"/>
</dbReference>
<dbReference type="Gene3D" id="3.30.30.10">
    <property type="entry name" value="Knottin, scorpion toxin-like"/>
    <property type="match status" value="1"/>
</dbReference>
<dbReference type="InterPro" id="IPR036574">
    <property type="entry name" value="Scorpion_toxin-like_sf"/>
</dbReference>
<dbReference type="InterPro" id="IPR001947">
    <property type="entry name" value="Scorpion_toxinS_K_inh"/>
</dbReference>
<dbReference type="Pfam" id="PF00451">
    <property type="entry name" value="Toxin_2"/>
    <property type="match status" value="1"/>
</dbReference>
<dbReference type="SUPFAM" id="SSF57095">
    <property type="entry name" value="Scorpion toxin-like"/>
    <property type="match status" value="1"/>
</dbReference>
<accession>P86115</accession>
<reference key="1">
    <citation type="journal article" date="2008" name="Toxicon">
        <title>Mass spectrometry analysis, amino acid sequence and biological activity of venom components from the Brazilian scorpion Opisthacanthus cayaporum.</title>
        <authorList>
            <person name="Schwartz E.F."/>
            <person name="Camargos T.S."/>
            <person name="Zamudio F.Z."/>
            <person name="Silva L.P."/>
            <person name="Bloch C. Jr."/>
            <person name="Caixeta F."/>
            <person name="Schwartz C.A."/>
            <person name="Possani L.D."/>
        </authorList>
    </citation>
    <scope>PROTEIN SEQUENCE</scope>
    <scope>SUBCELLULAR LOCATION</scope>
    <scope>MASS SPECTROMETRY</scope>
    <source>
        <tissue>Venom</tissue>
    </source>
</reference>
<organism>
    <name type="scientific">Opisthacanthus cayaporum</name>
    <name type="common">South American scorpion</name>
    <dbReference type="NCBI Taxonomy" id="573324"/>
    <lineage>
        <taxon>Eukaryota</taxon>
        <taxon>Metazoa</taxon>
        <taxon>Ecdysozoa</taxon>
        <taxon>Arthropoda</taxon>
        <taxon>Chelicerata</taxon>
        <taxon>Arachnida</taxon>
        <taxon>Scorpiones</taxon>
        <taxon>Iurida</taxon>
        <taxon>Scorpionoidea</taxon>
        <taxon>Hemiscorpiidae</taxon>
        <taxon>Opisthacanthus</taxon>
    </lineage>
</organism>
<comment type="function">
    <text evidence="1">Blocks voltage-gated potassium channels.</text>
</comment>
<comment type="subcellular location">
    <subcellularLocation>
        <location evidence="4">Secreted</location>
    </subcellularLocation>
</comment>
<comment type="tissue specificity">
    <text evidence="7">Expressed by the venom gland.</text>
</comment>
<comment type="domain">
    <text evidence="6">Has the structural arrangement of an alpha-helix connected to antiparallel beta-sheets by disulfide bonds (CS-alpha/beta).</text>
</comment>
<comment type="mass spectrometry" mass="3807.0" method="MALDI" evidence="4"/>
<comment type="miscellaneous">
    <text evidence="7">This protein elutes at 21.22 minutes.</text>
</comment>
<comment type="similarity">
    <text evidence="3">Belongs to the short scorpion toxin superfamily. Potassium channel inhibitor family. Alpha-KTx 06 subfamily.</text>
</comment>
<comment type="caution">
    <text evidence="6">Is identical to AC P86116 in mass and elution time, but not in sequence (2 amino acids are different).</text>
</comment>
<protein>
    <recommendedName>
        <fullName>Potassium channel toxin alpha-KTx6 OcyKTx1</fullName>
    </recommendedName>
</protein>
<evidence type="ECO:0000250" key="1">
    <source>
        <dbReference type="UniProtKB" id="P58498"/>
    </source>
</evidence>
<evidence type="ECO:0000250" key="2">
    <source>
        <dbReference type="UniProtKB" id="Q10726"/>
    </source>
</evidence>
<evidence type="ECO:0000255" key="3"/>
<evidence type="ECO:0000269" key="4">
    <source>
    </source>
</evidence>
<evidence type="ECO:0000303" key="5">
    <source>
    </source>
</evidence>
<evidence type="ECO:0000305" key="6"/>
<evidence type="ECO:0000305" key="7">
    <source>
    </source>
</evidence>
<keyword id="KW-0903">Direct protein sequencing</keyword>
<keyword id="KW-1015">Disulfide bond</keyword>
<keyword id="KW-0872">Ion channel impairing toxin</keyword>
<keyword id="KW-0632">Potassium channel impairing toxin</keyword>
<keyword id="KW-0964">Secreted</keyword>
<keyword id="KW-0800">Toxin</keyword>
<sequence length="26" mass="2871">IRCQGSNQCYGHCREKTGCPNGKCID</sequence>